<evidence type="ECO:0000255" key="1">
    <source>
        <dbReference type="HAMAP-Rule" id="MF_00016"/>
    </source>
</evidence>
<comment type="function">
    <text evidence="1">The RuvA-RuvB-RuvC complex processes Holliday junction (HJ) DNA during genetic recombination and DNA repair, while the RuvA-RuvB complex plays an important role in the rescue of blocked DNA replication forks via replication fork reversal (RFR). RuvA specifically binds to HJ cruciform DNA, conferring on it an open structure. The RuvB hexamer acts as an ATP-dependent pump, pulling dsDNA into and through the RuvAB complex. RuvB forms 2 homohexamers on either side of HJ DNA bound by 1 or 2 RuvA tetramers; 4 subunits per hexamer contact DNA at a time. Coordinated motions by a converter formed by DNA-disengaged RuvB subunits stimulates ATP hydrolysis and nucleotide exchange. Immobilization of the converter enables RuvB to convert the ATP-contained energy into a lever motion, pulling 2 nucleotides of DNA out of the RuvA tetramer per ATP hydrolyzed, thus driving DNA branch migration. The RuvB motors rotate together with the DNA substrate, which together with the progressing nucleotide cycle form the mechanistic basis for DNA recombination by continuous HJ branch migration. Branch migration allows RuvC to scan DNA until it finds its consensus sequence, where it cleaves and resolves cruciform DNA.</text>
</comment>
<comment type="catalytic activity">
    <reaction evidence="1">
        <text>ATP + H2O = ADP + phosphate + H(+)</text>
        <dbReference type="Rhea" id="RHEA:13065"/>
        <dbReference type="ChEBI" id="CHEBI:15377"/>
        <dbReference type="ChEBI" id="CHEBI:15378"/>
        <dbReference type="ChEBI" id="CHEBI:30616"/>
        <dbReference type="ChEBI" id="CHEBI:43474"/>
        <dbReference type="ChEBI" id="CHEBI:456216"/>
    </reaction>
</comment>
<comment type="subunit">
    <text evidence="1">Homohexamer. Forms an RuvA(8)-RuvB(12)-Holliday junction (HJ) complex. HJ DNA is sandwiched between 2 RuvA tetramers; dsDNA enters through RuvA and exits via RuvB. An RuvB hexamer assembles on each DNA strand where it exits the tetramer. Each RuvB hexamer is contacted by two RuvA subunits (via domain III) on 2 adjacent RuvB subunits; this complex drives branch migration. In the full resolvosome a probable DNA-RuvA(4)-RuvB(12)-RuvC(2) complex forms which resolves the HJ.</text>
</comment>
<comment type="subcellular location">
    <subcellularLocation>
        <location evidence="1">Cytoplasm</location>
    </subcellularLocation>
</comment>
<comment type="domain">
    <text evidence="1">Has 3 domains, the large (RuvB-L) and small ATPase (RuvB-S) domains and the C-terminal head (RuvB-H) domain. The head domain binds DNA, while the ATPase domains jointly bind ATP, ADP or are empty depending on the state of the subunit in the translocation cycle. During a single DNA translocation step the structure of each domain remains the same, but their relative positions change.</text>
</comment>
<comment type="similarity">
    <text evidence="1">Belongs to the RuvB family.</text>
</comment>
<accession>A9KP49</accession>
<protein>
    <recommendedName>
        <fullName evidence="1">Holliday junction branch migration complex subunit RuvB</fullName>
        <ecNumber evidence="1">3.6.4.-</ecNumber>
    </recommendedName>
</protein>
<gene>
    <name evidence="1" type="primary">ruvB</name>
    <name type="ordered locus">Cphy_1334</name>
</gene>
<keyword id="KW-0067">ATP-binding</keyword>
<keyword id="KW-0963">Cytoplasm</keyword>
<keyword id="KW-0227">DNA damage</keyword>
<keyword id="KW-0233">DNA recombination</keyword>
<keyword id="KW-0234">DNA repair</keyword>
<keyword id="KW-0238">DNA-binding</keyword>
<keyword id="KW-0378">Hydrolase</keyword>
<keyword id="KW-0547">Nucleotide-binding</keyword>
<keyword id="KW-1185">Reference proteome</keyword>
<dbReference type="EC" id="3.6.4.-" evidence="1"/>
<dbReference type="EMBL" id="CP000885">
    <property type="protein sequence ID" value="ABX41711.1"/>
    <property type="molecule type" value="Genomic_DNA"/>
</dbReference>
<dbReference type="RefSeq" id="WP_012199364.1">
    <property type="nucleotide sequence ID" value="NC_010001.1"/>
</dbReference>
<dbReference type="SMR" id="A9KP49"/>
<dbReference type="STRING" id="357809.Cphy_1334"/>
<dbReference type="KEGG" id="cpy:Cphy_1334"/>
<dbReference type="eggNOG" id="COG2255">
    <property type="taxonomic scope" value="Bacteria"/>
</dbReference>
<dbReference type="HOGENOM" id="CLU_055599_1_0_9"/>
<dbReference type="OrthoDB" id="9804478at2"/>
<dbReference type="Proteomes" id="UP000000370">
    <property type="component" value="Chromosome"/>
</dbReference>
<dbReference type="GO" id="GO:0005737">
    <property type="term" value="C:cytoplasm"/>
    <property type="evidence" value="ECO:0007669"/>
    <property type="project" value="UniProtKB-SubCell"/>
</dbReference>
<dbReference type="GO" id="GO:0048476">
    <property type="term" value="C:Holliday junction resolvase complex"/>
    <property type="evidence" value="ECO:0007669"/>
    <property type="project" value="UniProtKB-UniRule"/>
</dbReference>
<dbReference type="GO" id="GO:0005524">
    <property type="term" value="F:ATP binding"/>
    <property type="evidence" value="ECO:0007669"/>
    <property type="project" value="UniProtKB-UniRule"/>
</dbReference>
<dbReference type="GO" id="GO:0016887">
    <property type="term" value="F:ATP hydrolysis activity"/>
    <property type="evidence" value="ECO:0007669"/>
    <property type="project" value="InterPro"/>
</dbReference>
<dbReference type="GO" id="GO:0000400">
    <property type="term" value="F:four-way junction DNA binding"/>
    <property type="evidence" value="ECO:0007669"/>
    <property type="project" value="UniProtKB-UniRule"/>
</dbReference>
<dbReference type="GO" id="GO:0009378">
    <property type="term" value="F:four-way junction helicase activity"/>
    <property type="evidence" value="ECO:0007669"/>
    <property type="project" value="InterPro"/>
</dbReference>
<dbReference type="GO" id="GO:0006310">
    <property type="term" value="P:DNA recombination"/>
    <property type="evidence" value="ECO:0007669"/>
    <property type="project" value="UniProtKB-UniRule"/>
</dbReference>
<dbReference type="GO" id="GO:0006281">
    <property type="term" value="P:DNA repair"/>
    <property type="evidence" value="ECO:0007669"/>
    <property type="project" value="UniProtKB-UniRule"/>
</dbReference>
<dbReference type="CDD" id="cd00009">
    <property type="entry name" value="AAA"/>
    <property type="match status" value="1"/>
</dbReference>
<dbReference type="Gene3D" id="1.10.8.60">
    <property type="match status" value="1"/>
</dbReference>
<dbReference type="Gene3D" id="3.40.50.300">
    <property type="entry name" value="P-loop containing nucleotide triphosphate hydrolases"/>
    <property type="match status" value="1"/>
</dbReference>
<dbReference type="Gene3D" id="1.10.10.10">
    <property type="entry name" value="Winged helix-like DNA-binding domain superfamily/Winged helix DNA-binding domain"/>
    <property type="match status" value="1"/>
</dbReference>
<dbReference type="HAMAP" id="MF_00016">
    <property type="entry name" value="DNA_HJ_migration_RuvB"/>
    <property type="match status" value="1"/>
</dbReference>
<dbReference type="InterPro" id="IPR003593">
    <property type="entry name" value="AAA+_ATPase"/>
</dbReference>
<dbReference type="InterPro" id="IPR041445">
    <property type="entry name" value="AAA_lid_4"/>
</dbReference>
<dbReference type="InterPro" id="IPR004605">
    <property type="entry name" value="DNA_helicase_Holl-junc_RuvB"/>
</dbReference>
<dbReference type="InterPro" id="IPR027417">
    <property type="entry name" value="P-loop_NTPase"/>
</dbReference>
<dbReference type="InterPro" id="IPR008824">
    <property type="entry name" value="RuvB-like_N"/>
</dbReference>
<dbReference type="InterPro" id="IPR008823">
    <property type="entry name" value="RuvB_C"/>
</dbReference>
<dbReference type="InterPro" id="IPR036388">
    <property type="entry name" value="WH-like_DNA-bd_sf"/>
</dbReference>
<dbReference type="InterPro" id="IPR036390">
    <property type="entry name" value="WH_DNA-bd_sf"/>
</dbReference>
<dbReference type="NCBIfam" id="NF000868">
    <property type="entry name" value="PRK00080.1"/>
    <property type="match status" value="1"/>
</dbReference>
<dbReference type="NCBIfam" id="TIGR00635">
    <property type="entry name" value="ruvB"/>
    <property type="match status" value="1"/>
</dbReference>
<dbReference type="PANTHER" id="PTHR42848">
    <property type="match status" value="1"/>
</dbReference>
<dbReference type="PANTHER" id="PTHR42848:SF1">
    <property type="entry name" value="HOLLIDAY JUNCTION BRANCH MIGRATION COMPLEX SUBUNIT RUVB"/>
    <property type="match status" value="1"/>
</dbReference>
<dbReference type="Pfam" id="PF17864">
    <property type="entry name" value="AAA_lid_4"/>
    <property type="match status" value="1"/>
</dbReference>
<dbReference type="Pfam" id="PF05491">
    <property type="entry name" value="RuvB_C"/>
    <property type="match status" value="1"/>
</dbReference>
<dbReference type="Pfam" id="PF05496">
    <property type="entry name" value="RuvB_N"/>
    <property type="match status" value="1"/>
</dbReference>
<dbReference type="SMART" id="SM00382">
    <property type="entry name" value="AAA"/>
    <property type="match status" value="1"/>
</dbReference>
<dbReference type="SUPFAM" id="SSF52540">
    <property type="entry name" value="P-loop containing nucleoside triphosphate hydrolases"/>
    <property type="match status" value="1"/>
</dbReference>
<dbReference type="SUPFAM" id="SSF46785">
    <property type="entry name" value="Winged helix' DNA-binding domain"/>
    <property type="match status" value="1"/>
</dbReference>
<feature type="chain" id="PRO_1000074079" description="Holliday junction branch migration complex subunit RuvB">
    <location>
        <begin position="1"/>
        <end position="336"/>
    </location>
</feature>
<feature type="region of interest" description="Large ATPase domain (RuvB-L)" evidence="1">
    <location>
        <begin position="1"/>
        <end position="182"/>
    </location>
</feature>
<feature type="region of interest" description="Small ATPAse domain (RuvB-S)" evidence="1">
    <location>
        <begin position="183"/>
        <end position="253"/>
    </location>
</feature>
<feature type="region of interest" description="Head domain (RuvB-H)" evidence="1">
    <location>
        <begin position="256"/>
        <end position="336"/>
    </location>
</feature>
<feature type="binding site" evidence="1">
    <location>
        <position position="21"/>
    </location>
    <ligand>
        <name>ATP</name>
        <dbReference type="ChEBI" id="CHEBI:30616"/>
    </ligand>
</feature>
<feature type="binding site" evidence="1">
    <location>
        <position position="22"/>
    </location>
    <ligand>
        <name>ATP</name>
        <dbReference type="ChEBI" id="CHEBI:30616"/>
    </ligand>
</feature>
<feature type="binding site" evidence="1">
    <location>
        <position position="63"/>
    </location>
    <ligand>
        <name>ATP</name>
        <dbReference type="ChEBI" id="CHEBI:30616"/>
    </ligand>
</feature>
<feature type="binding site" evidence="1">
    <location>
        <position position="66"/>
    </location>
    <ligand>
        <name>ATP</name>
        <dbReference type="ChEBI" id="CHEBI:30616"/>
    </ligand>
</feature>
<feature type="binding site" evidence="1">
    <location>
        <position position="67"/>
    </location>
    <ligand>
        <name>ATP</name>
        <dbReference type="ChEBI" id="CHEBI:30616"/>
    </ligand>
</feature>
<feature type="binding site" evidence="1">
    <location>
        <position position="67"/>
    </location>
    <ligand>
        <name>Mg(2+)</name>
        <dbReference type="ChEBI" id="CHEBI:18420"/>
    </ligand>
</feature>
<feature type="binding site" evidence="1">
    <location>
        <position position="68"/>
    </location>
    <ligand>
        <name>ATP</name>
        <dbReference type="ChEBI" id="CHEBI:30616"/>
    </ligand>
</feature>
<feature type="binding site" evidence="1">
    <location>
        <begin position="129"/>
        <end position="131"/>
    </location>
    <ligand>
        <name>ATP</name>
        <dbReference type="ChEBI" id="CHEBI:30616"/>
    </ligand>
</feature>
<feature type="binding site" evidence="1">
    <location>
        <position position="172"/>
    </location>
    <ligand>
        <name>ATP</name>
        <dbReference type="ChEBI" id="CHEBI:30616"/>
    </ligand>
</feature>
<feature type="binding site" evidence="1">
    <location>
        <position position="182"/>
    </location>
    <ligand>
        <name>ATP</name>
        <dbReference type="ChEBI" id="CHEBI:30616"/>
    </ligand>
</feature>
<feature type="binding site" evidence="1">
    <location>
        <position position="219"/>
    </location>
    <ligand>
        <name>ATP</name>
        <dbReference type="ChEBI" id="CHEBI:30616"/>
    </ligand>
</feature>
<feature type="binding site" evidence="1">
    <location>
        <position position="311"/>
    </location>
    <ligand>
        <name>DNA</name>
        <dbReference type="ChEBI" id="CHEBI:16991"/>
    </ligand>
</feature>
<feature type="binding site" evidence="1">
    <location>
        <position position="316"/>
    </location>
    <ligand>
        <name>DNA</name>
        <dbReference type="ChEBI" id="CHEBI:16991"/>
    </ligand>
</feature>
<reference key="1">
    <citation type="submission" date="2007-11" db="EMBL/GenBank/DDBJ databases">
        <title>Complete genome sequence of Clostridium phytofermentans ISDg.</title>
        <authorList>
            <person name="Leschine S.B."/>
            <person name="Warnick T.A."/>
            <person name="Blanchard J.L."/>
            <person name="Schnell D.J."/>
            <person name="Petit E.L."/>
            <person name="LaTouf W.G."/>
            <person name="Copeland A."/>
            <person name="Lucas S."/>
            <person name="Lapidus A."/>
            <person name="Barry K."/>
            <person name="Glavina del Rio T."/>
            <person name="Dalin E."/>
            <person name="Tice H."/>
            <person name="Pitluck S."/>
            <person name="Kiss H."/>
            <person name="Brettin T."/>
            <person name="Bruce D."/>
            <person name="Detter J.C."/>
            <person name="Han C."/>
            <person name="Kuske C."/>
            <person name="Schmutz J."/>
            <person name="Larimer F."/>
            <person name="Land M."/>
            <person name="Hauser L."/>
            <person name="Kyrpides N."/>
            <person name="Kim E.A."/>
            <person name="Richardson P."/>
        </authorList>
    </citation>
    <scope>NUCLEOTIDE SEQUENCE [LARGE SCALE GENOMIC DNA]</scope>
    <source>
        <strain>ATCC 700394 / DSM 18823 / ISDg</strain>
    </source>
</reference>
<proteinExistence type="inferred from homology"/>
<organism>
    <name type="scientific">Lachnoclostridium phytofermentans (strain ATCC 700394 / DSM 18823 / ISDg)</name>
    <name type="common">Clostridium phytofermentans</name>
    <dbReference type="NCBI Taxonomy" id="357809"/>
    <lineage>
        <taxon>Bacteria</taxon>
        <taxon>Bacillati</taxon>
        <taxon>Bacillota</taxon>
        <taxon>Clostridia</taxon>
        <taxon>Lachnospirales</taxon>
        <taxon>Lachnospiraceae</taxon>
    </lineage>
</organism>
<sequence length="336" mass="37579">MAKRMITTELMEEDVKLETSLRPQMLEDYIGQKKAKENLKVYIEAAKQRKESLDHVLFFGPPGLGKTTLAGIIANEMGVNLKTTAGPAIEKPGDMAAILNNLQEGDVLFIDEIHRLNRQVEELLYPAMEDYVIDIVIGKGATAKSIRLDLPRFTLVGATTRAGMLTAPLRDRFGVVHRLEFYTTEELKEIITRSAKVLQVEIDDCGATELARRSRGTPRLANRLLKRVRDFAQVKYDGRITEEVARFALDILEVDKLGLDHIDRQILVTMIEKFAGGPVGIDAIATTIGEDSGTVEEVYEPYLVQNGLILRTPRGRVVTQEAYLHCGLPYENKELS</sequence>
<name>RUVB_LACP7</name>